<organism>
    <name type="scientific">Kineococcus radiotolerans (strain ATCC BAA-149 / DSM 14245 / SRS30216)</name>
    <dbReference type="NCBI Taxonomy" id="266940"/>
    <lineage>
        <taxon>Bacteria</taxon>
        <taxon>Bacillati</taxon>
        <taxon>Actinomycetota</taxon>
        <taxon>Actinomycetes</taxon>
        <taxon>Kineosporiales</taxon>
        <taxon>Kineosporiaceae</taxon>
        <taxon>Kineococcus</taxon>
    </lineage>
</organism>
<feature type="chain" id="PRO_1000079044" description="Trigger factor">
    <location>
        <begin position="1"/>
        <end position="471"/>
    </location>
</feature>
<feature type="domain" description="PPIase FKBP-type" evidence="1">
    <location>
        <begin position="165"/>
        <end position="244"/>
    </location>
</feature>
<feature type="region of interest" description="Disordered" evidence="2">
    <location>
        <begin position="407"/>
        <end position="471"/>
    </location>
</feature>
<feature type="compositionally biased region" description="Acidic residues" evidence="2">
    <location>
        <begin position="416"/>
        <end position="443"/>
    </location>
</feature>
<protein>
    <recommendedName>
        <fullName evidence="1">Trigger factor</fullName>
        <shortName evidence="1">TF</shortName>
        <ecNumber evidence="1">5.2.1.8</ecNumber>
    </recommendedName>
    <alternativeName>
        <fullName evidence="1">PPIase</fullName>
    </alternativeName>
</protein>
<comment type="function">
    <text evidence="1">Involved in protein export. Acts as a chaperone by maintaining the newly synthesized protein in an open conformation. Functions as a peptidyl-prolyl cis-trans isomerase.</text>
</comment>
<comment type="catalytic activity">
    <reaction evidence="1">
        <text>[protein]-peptidylproline (omega=180) = [protein]-peptidylproline (omega=0)</text>
        <dbReference type="Rhea" id="RHEA:16237"/>
        <dbReference type="Rhea" id="RHEA-COMP:10747"/>
        <dbReference type="Rhea" id="RHEA-COMP:10748"/>
        <dbReference type="ChEBI" id="CHEBI:83833"/>
        <dbReference type="ChEBI" id="CHEBI:83834"/>
        <dbReference type="EC" id="5.2.1.8"/>
    </reaction>
</comment>
<comment type="subcellular location">
    <subcellularLocation>
        <location>Cytoplasm</location>
    </subcellularLocation>
    <text evidence="1">About half TF is bound to the ribosome near the polypeptide exit tunnel while the other half is free in the cytoplasm.</text>
</comment>
<comment type="domain">
    <text evidence="1">Consists of 3 domains; the N-terminus binds the ribosome, the middle domain has PPIase activity, while the C-terminus has intrinsic chaperone activity on its own.</text>
</comment>
<comment type="similarity">
    <text evidence="1">Belongs to the FKBP-type PPIase family. Tig subfamily.</text>
</comment>
<sequence>MKSDVETLNPTRVKFTVEVGYDELKPSLDKAYKTIAGQVQVPGFRKGKVPPRVIDQRFGRAAVLEEAVNDALPKFYQQAVEASDFLPLGQPTVDVSQAPDPKDGGDLKFSVEVDVRPVLELPDLESIAVTVDDLQVPEEEVETRLTALRERFGTLTGVDRPAADGDFVSIDLRAEIDGEEIETAKGISYRIGQGNMIEGLDEALTGVAAEGSTTFTAPLAGGERKGQDASITVTVQSVKERVLPEADDDFAQLASEFDTLEELRADLLSQVEQSKKFEQGLQARDKVLEKLLETVEVPVPESLVEAEIHAHLERESRLEDAEHRAEIEDSTRQAIRSQLLLDALADREEIGVEQGELIEYLVGQAQQYGMEPQQFVQMVDGAGQVPSMVSEVRRRKALAVAMEKATVTDASGNPVDLEELVGGTEEDDVTEDATEDVTEDAAPAEEGQTVDPTGDDEQAAAEATAEDPAKS</sequence>
<accession>A6WDU2</accession>
<evidence type="ECO:0000255" key="1">
    <source>
        <dbReference type="HAMAP-Rule" id="MF_00303"/>
    </source>
</evidence>
<evidence type="ECO:0000256" key="2">
    <source>
        <dbReference type="SAM" id="MobiDB-lite"/>
    </source>
</evidence>
<keyword id="KW-0131">Cell cycle</keyword>
<keyword id="KW-0132">Cell division</keyword>
<keyword id="KW-0143">Chaperone</keyword>
<keyword id="KW-0963">Cytoplasm</keyword>
<keyword id="KW-0413">Isomerase</keyword>
<keyword id="KW-1185">Reference proteome</keyword>
<keyword id="KW-0697">Rotamase</keyword>
<dbReference type="EC" id="5.2.1.8" evidence="1"/>
<dbReference type="EMBL" id="CP000750">
    <property type="protein sequence ID" value="ABS04981.1"/>
    <property type="molecule type" value="Genomic_DNA"/>
</dbReference>
<dbReference type="RefSeq" id="WP_012086759.1">
    <property type="nucleotide sequence ID" value="NC_009664.2"/>
</dbReference>
<dbReference type="SMR" id="A6WDU2"/>
<dbReference type="STRING" id="266940.Krad_3518"/>
<dbReference type="KEGG" id="kra:Krad_3518"/>
<dbReference type="eggNOG" id="COG0544">
    <property type="taxonomic scope" value="Bacteria"/>
</dbReference>
<dbReference type="HOGENOM" id="CLU_033058_3_0_11"/>
<dbReference type="OrthoDB" id="9767721at2"/>
<dbReference type="Proteomes" id="UP000001116">
    <property type="component" value="Chromosome"/>
</dbReference>
<dbReference type="GO" id="GO:0005737">
    <property type="term" value="C:cytoplasm"/>
    <property type="evidence" value="ECO:0007669"/>
    <property type="project" value="UniProtKB-SubCell"/>
</dbReference>
<dbReference type="GO" id="GO:0003755">
    <property type="term" value="F:peptidyl-prolyl cis-trans isomerase activity"/>
    <property type="evidence" value="ECO:0007669"/>
    <property type="project" value="UniProtKB-UniRule"/>
</dbReference>
<dbReference type="GO" id="GO:0044183">
    <property type="term" value="F:protein folding chaperone"/>
    <property type="evidence" value="ECO:0007669"/>
    <property type="project" value="TreeGrafter"/>
</dbReference>
<dbReference type="GO" id="GO:0043022">
    <property type="term" value="F:ribosome binding"/>
    <property type="evidence" value="ECO:0007669"/>
    <property type="project" value="TreeGrafter"/>
</dbReference>
<dbReference type="GO" id="GO:0051083">
    <property type="term" value="P:'de novo' cotranslational protein folding"/>
    <property type="evidence" value="ECO:0007669"/>
    <property type="project" value="TreeGrafter"/>
</dbReference>
<dbReference type="GO" id="GO:0051301">
    <property type="term" value="P:cell division"/>
    <property type="evidence" value="ECO:0007669"/>
    <property type="project" value="UniProtKB-KW"/>
</dbReference>
<dbReference type="GO" id="GO:0061077">
    <property type="term" value="P:chaperone-mediated protein folding"/>
    <property type="evidence" value="ECO:0007669"/>
    <property type="project" value="TreeGrafter"/>
</dbReference>
<dbReference type="GO" id="GO:0015031">
    <property type="term" value="P:protein transport"/>
    <property type="evidence" value="ECO:0007669"/>
    <property type="project" value="UniProtKB-UniRule"/>
</dbReference>
<dbReference type="GO" id="GO:0043335">
    <property type="term" value="P:protein unfolding"/>
    <property type="evidence" value="ECO:0007669"/>
    <property type="project" value="TreeGrafter"/>
</dbReference>
<dbReference type="Gene3D" id="3.10.50.40">
    <property type="match status" value="1"/>
</dbReference>
<dbReference type="Gene3D" id="3.30.70.1050">
    <property type="entry name" value="Trigger factor ribosome-binding domain"/>
    <property type="match status" value="1"/>
</dbReference>
<dbReference type="Gene3D" id="1.10.3120.10">
    <property type="entry name" value="Trigger factor, C-terminal domain"/>
    <property type="match status" value="1"/>
</dbReference>
<dbReference type="HAMAP" id="MF_00303">
    <property type="entry name" value="Trigger_factor_Tig"/>
    <property type="match status" value="1"/>
</dbReference>
<dbReference type="InterPro" id="IPR046357">
    <property type="entry name" value="PPIase_dom_sf"/>
</dbReference>
<dbReference type="InterPro" id="IPR001179">
    <property type="entry name" value="PPIase_FKBP_dom"/>
</dbReference>
<dbReference type="InterPro" id="IPR005215">
    <property type="entry name" value="Trig_fac"/>
</dbReference>
<dbReference type="InterPro" id="IPR008880">
    <property type="entry name" value="Trigger_fac_C"/>
</dbReference>
<dbReference type="InterPro" id="IPR037041">
    <property type="entry name" value="Trigger_fac_C_sf"/>
</dbReference>
<dbReference type="InterPro" id="IPR008881">
    <property type="entry name" value="Trigger_fac_ribosome-bd_bac"/>
</dbReference>
<dbReference type="InterPro" id="IPR036611">
    <property type="entry name" value="Trigger_fac_ribosome-bd_sf"/>
</dbReference>
<dbReference type="InterPro" id="IPR027304">
    <property type="entry name" value="Trigger_fact/SurA_dom_sf"/>
</dbReference>
<dbReference type="NCBIfam" id="TIGR00115">
    <property type="entry name" value="tig"/>
    <property type="match status" value="1"/>
</dbReference>
<dbReference type="PANTHER" id="PTHR30560">
    <property type="entry name" value="TRIGGER FACTOR CHAPERONE AND PEPTIDYL-PROLYL CIS/TRANS ISOMERASE"/>
    <property type="match status" value="1"/>
</dbReference>
<dbReference type="PANTHER" id="PTHR30560:SF3">
    <property type="entry name" value="TRIGGER FACTOR-LIKE PROTEIN TIG, CHLOROPLASTIC"/>
    <property type="match status" value="1"/>
</dbReference>
<dbReference type="Pfam" id="PF00254">
    <property type="entry name" value="FKBP_C"/>
    <property type="match status" value="1"/>
</dbReference>
<dbReference type="Pfam" id="PF05698">
    <property type="entry name" value="Trigger_C"/>
    <property type="match status" value="1"/>
</dbReference>
<dbReference type="Pfam" id="PF05697">
    <property type="entry name" value="Trigger_N"/>
    <property type="match status" value="1"/>
</dbReference>
<dbReference type="PIRSF" id="PIRSF003095">
    <property type="entry name" value="Trigger_factor"/>
    <property type="match status" value="1"/>
</dbReference>
<dbReference type="SUPFAM" id="SSF54534">
    <property type="entry name" value="FKBP-like"/>
    <property type="match status" value="1"/>
</dbReference>
<dbReference type="SUPFAM" id="SSF109998">
    <property type="entry name" value="Triger factor/SurA peptide-binding domain-like"/>
    <property type="match status" value="1"/>
</dbReference>
<dbReference type="SUPFAM" id="SSF102735">
    <property type="entry name" value="Trigger factor ribosome-binding domain"/>
    <property type="match status" value="1"/>
</dbReference>
<gene>
    <name evidence="1" type="primary">tig</name>
    <name type="ordered locus">Krad_3518</name>
</gene>
<proteinExistence type="inferred from homology"/>
<reference key="1">
    <citation type="journal article" date="2008" name="PLoS ONE">
        <title>Survival in nuclear waste, extreme resistance, and potential applications gleaned from the genome sequence of Kineococcus radiotolerans SRS30216.</title>
        <authorList>
            <person name="Bagwell C.E."/>
            <person name="Bhat S."/>
            <person name="Hawkins G.M."/>
            <person name="Smith B.W."/>
            <person name="Biswas T."/>
            <person name="Hoover T.R."/>
            <person name="Saunders E."/>
            <person name="Han C.S."/>
            <person name="Tsodikov O.V."/>
            <person name="Shimkets L.J."/>
        </authorList>
    </citation>
    <scope>NUCLEOTIDE SEQUENCE [LARGE SCALE GENOMIC DNA]</scope>
    <source>
        <strain>ATCC BAA-149 / DSM 14245 / SRS30216</strain>
    </source>
</reference>
<name>TIG_KINRD</name>